<dbReference type="EMBL" id="AP006716">
    <property type="protein sequence ID" value="BAE04385.1"/>
    <property type="molecule type" value="Genomic_DNA"/>
</dbReference>
<dbReference type="RefSeq" id="WP_011275380.1">
    <property type="nucleotide sequence ID" value="NC_007168.1"/>
</dbReference>
<dbReference type="SMR" id="Q4L7J0"/>
<dbReference type="KEGG" id="sha:SH1076"/>
<dbReference type="eggNOG" id="COG4840">
    <property type="taxonomic scope" value="Bacteria"/>
</dbReference>
<dbReference type="HOGENOM" id="CLU_199533_0_0_9"/>
<dbReference type="OrthoDB" id="2404926at2"/>
<dbReference type="Proteomes" id="UP000000543">
    <property type="component" value="Chromosome"/>
</dbReference>
<dbReference type="HAMAP" id="MF_00829">
    <property type="entry name" value="UPF0435"/>
    <property type="match status" value="1"/>
</dbReference>
<dbReference type="InterPro" id="IPR009507">
    <property type="entry name" value="UPF0435"/>
</dbReference>
<dbReference type="Pfam" id="PF06569">
    <property type="entry name" value="DUF1128"/>
    <property type="match status" value="1"/>
</dbReference>
<comment type="similarity">
    <text evidence="1">Belongs to the UPF0435 family.</text>
</comment>
<feature type="chain" id="PRO_0000291426" description="UPF0435 protein SH1076">
    <location>
        <begin position="1"/>
        <end position="69"/>
    </location>
</feature>
<name>Y1076_STAHJ</name>
<reference key="1">
    <citation type="journal article" date="2005" name="J. Bacteriol.">
        <title>Whole-genome sequencing of Staphylococcus haemolyticus uncovers the extreme plasticity of its genome and the evolution of human-colonizing staphylococcal species.</title>
        <authorList>
            <person name="Takeuchi F."/>
            <person name="Watanabe S."/>
            <person name="Baba T."/>
            <person name="Yuzawa H."/>
            <person name="Ito T."/>
            <person name="Morimoto Y."/>
            <person name="Kuroda M."/>
            <person name="Cui L."/>
            <person name="Takahashi M."/>
            <person name="Ankai A."/>
            <person name="Baba S."/>
            <person name="Fukui S."/>
            <person name="Lee J.C."/>
            <person name="Hiramatsu K."/>
        </authorList>
    </citation>
    <scope>NUCLEOTIDE SEQUENCE [LARGE SCALE GENOMIC DNA]</scope>
    <source>
        <strain>JCSC1435</strain>
    </source>
</reference>
<accession>Q4L7J0</accession>
<evidence type="ECO:0000255" key="1">
    <source>
        <dbReference type="HAMAP-Rule" id="MF_00829"/>
    </source>
</evidence>
<sequence length="69" mass="7834">MSQNNNETMIADIRKKLNIVNQGLLNPDKFKNANQQDIEEIHNFVMSKDSFSPSEVTAIADELGNLRQD</sequence>
<organism>
    <name type="scientific">Staphylococcus haemolyticus (strain JCSC1435)</name>
    <dbReference type="NCBI Taxonomy" id="279808"/>
    <lineage>
        <taxon>Bacteria</taxon>
        <taxon>Bacillati</taxon>
        <taxon>Bacillota</taxon>
        <taxon>Bacilli</taxon>
        <taxon>Bacillales</taxon>
        <taxon>Staphylococcaceae</taxon>
        <taxon>Staphylococcus</taxon>
    </lineage>
</organism>
<gene>
    <name type="ordered locus">SH1076</name>
</gene>
<proteinExistence type="inferred from homology"/>
<protein>
    <recommendedName>
        <fullName evidence="1">UPF0435 protein SH1076</fullName>
    </recommendedName>
</protein>